<protein>
    <recommendedName>
        <fullName>Probable metal transport system membrane protein CT_070</fullName>
    </recommendedName>
</protein>
<organism>
    <name type="scientific">Chlamydia trachomatis serovar D (strain ATCC VR-885 / DSM 19411 / UW-3/Cx)</name>
    <dbReference type="NCBI Taxonomy" id="272561"/>
    <lineage>
        <taxon>Bacteria</taxon>
        <taxon>Pseudomonadati</taxon>
        <taxon>Chlamydiota</taxon>
        <taxon>Chlamydiia</taxon>
        <taxon>Chlamydiales</taxon>
        <taxon>Chlamydiaceae</taxon>
        <taxon>Chlamydia/Chlamydophila group</taxon>
        <taxon>Chlamydia</taxon>
    </lineage>
</organism>
<reference key="1">
    <citation type="journal article" date="1998" name="Science">
        <title>Genome sequence of an obligate intracellular pathogen of humans: Chlamydia trachomatis.</title>
        <authorList>
            <person name="Stephens R.S."/>
            <person name="Kalman S."/>
            <person name="Lammel C.J."/>
            <person name="Fan J."/>
            <person name="Marathe R."/>
            <person name="Aravind L."/>
            <person name="Mitchell W.P."/>
            <person name="Olinger L."/>
            <person name="Tatusov R.L."/>
            <person name="Zhao Q."/>
            <person name="Koonin E.V."/>
            <person name="Davis R.W."/>
        </authorList>
    </citation>
    <scope>NUCLEOTIDE SEQUENCE [LARGE SCALE GENOMIC DNA]</scope>
    <source>
        <strain>ATCC VR-885 / DSM 19411 / UW-3/Cx</strain>
    </source>
</reference>
<comment type="function">
    <text>Part of an ATP-driven transport system CT_067/CT_068/CT_069/CT_070 for a metal.</text>
</comment>
<comment type="subcellular location">
    <subcellularLocation>
        <location evidence="2">Cell inner membrane</location>
        <topology evidence="2">Multi-pass membrane protein</topology>
    </subcellularLocation>
</comment>
<comment type="similarity">
    <text evidence="2">Belongs to the ABC-3 integral membrane protein family.</text>
</comment>
<proteinExistence type="inferred from homology"/>
<name>Y070_CHLTR</name>
<feature type="chain" id="PRO_0000171168" description="Probable metal transport system membrane protein CT_070">
    <location>
        <begin position="1"/>
        <end position="318"/>
    </location>
</feature>
<feature type="transmembrane region" description="Helical" evidence="1">
    <location>
        <begin position="1"/>
        <end position="21"/>
    </location>
</feature>
<feature type="transmembrane region" description="Helical" evidence="1">
    <location>
        <begin position="39"/>
        <end position="59"/>
    </location>
</feature>
<feature type="transmembrane region" description="Helical" evidence="1">
    <location>
        <begin position="64"/>
        <end position="84"/>
    </location>
</feature>
<feature type="transmembrane region" description="Helical" evidence="1">
    <location>
        <begin position="94"/>
        <end position="114"/>
    </location>
</feature>
<feature type="transmembrane region" description="Helical" evidence="1">
    <location>
        <begin position="124"/>
        <end position="144"/>
    </location>
</feature>
<feature type="transmembrane region" description="Helical" evidence="1">
    <location>
        <begin position="170"/>
        <end position="190"/>
    </location>
</feature>
<feature type="transmembrane region" description="Helical" evidence="1">
    <location>
        <begin position="196"/>
        <end position="216"/>
    </location>
</feature>
<feature type="transmembrane region" description="Helical" evidence="1">
    <location>
        <begin position="226"/>
        <end position="246"/>
    </location>
</feature>
<feature type="transmembrane region" description="Helical" evidence="1">
    <location>
        <begin position="252"/>
        <end position="272"/>
    </location>
</feature>
<feature type="transmembrane region" description="Helical" evidence="1">
    <location>
        <begin position="285"/>
        <end position="305"/>
    </location>
</feature>
<dbReference type="EMBL" id="AE001273">
    <property type="protein sequence ID" value="AAC67661.1"/>
    <property type="molecule type" value="Genomic_DNA"/>
</dbReference>
<dbReference type="PIR" id="H71561">
    <property type="entry name" value="H71561"/>
</dbReference>
<dbReference type="RefSeq" id="WP_009871419.1">
    <property type="nucleotide sequence ID" value="NC_000117.1"/>
</dbReference>
<dbReference type="SMR" id="O84073"/>
<dbReference type="FunCoup" id="O84073">
    <property type="interactions" value="21"/>
</dbReference>
<dbReference type="STRING" id="272561.CT_070"/>
<dbReference type="TCDB" id="3.A.1.15.12">
    <property type="family name" value="the atp-binding cassette (abc) superfamily"/>
</dbReference>
<dbReference type="EnsemblBacteria" id="AAC67661">
    <property type="protein sequence ID" value="AAC67661"/>
    <property type="gene ID" value="CT_070"/>
</dbReference>
<dbReference type="KEGG" id="ctr:CT_070"/>
<dbReference type="PATRIC" id="fig|272561.5.peg.79"/>
<dbReference type="HOGENOM" id="CLU_028808_2_0_0"/>
<dbReference type="InParanoid" id="O84073"/>
<dbReference type="OrthoDB" id="9788905at2"/>
<dbReference type="Proteomes" id="UP000000431">
    <property type="component" value="Chromosome"/>
</dbReference>
<dbReference type="GO" id="GO:0043190">
    <property type="term" value="C:ATP-binding cassette (ABC) transporter complex"/>
    <property type="evidence" value="ECO:0007669"/>
    <property type="project" value="InterPro"/>
</dbReference>
<dbReference type="GO" id="GO:0005886">
    <property type="term" value="C:plasma membrane"/>
    <property type="evidence" value="ECO:0000318"/>
    <property type="project" value="GO_Central"/>
</dbReference>
<dbReference type="GO" id="GO:0010043">
    <property type="term" value="P:response to zinc ion"/>
    <property type="evidence" value="ECO:0000318"/>
    <property type="project" value="GO_Central"/>
</dbReference>
<dbReference type="GO" id="GO:0055085">
    <property type="term" value="P:transmembrane transport"/>
    <property type="evidence" value="ECO:0007669"/>
    <property type="project" value="InterPro"/>
</dbReference>
<dbReference type="FunFam" id="1.10.3470.10:FF:000032">
    <property type="entry name" value="ABC transporter ATP-binding protein"/>
    <property type="match status" value="1"/>
</dbReference>
<dbReference type="Gene3D" id="1.10.3470.10">
    <property type="entry name" value="ABC transporter involved in vitamin B12 uptake, BtuC"/>
    <property type="match status" value="1"/>
</dbReference>
<dbReference type="InterPro" id="IPR037294">
    <property type="entry name" value="ABC_BtuC-like"/>
</dbReference>
<dbReference type="InterPro" id="IPR001626">
    <property type="entry name" value="ABC_TroCD"/>
</dbReference>
<dbReference type="PANTHER" id="PTHR30477">
    <property type="entry name" value="ABC-TRANSPORTER METAL-BINDING PROTEIN"/>
    <property type="match status" value="1"/>
</dbReference>
<dbReference type="PANTHER" id="PTHR30477:SF8">
    <property type="entry name" value="METAL TRANSPORT SYSTEM MEMBRANE PROTEIN CT_070-RELATED"/>
    <property type="match status" value="1"/>
</dbReference>
<dbReference type="Pfam" id="PF00950">
    <property type="entry name" value="ABC-3"/>
    <property type="match status" value="1"/>
</dbReference>
<dbReference type="SUPFAM" id="SSF81345">
    <property type="entry name" value="ABC transporter involved in vitamin B12 uptake, BtuC"/>
    <property type="match status" value="1"/>
</dbReference>
<sequence>MVASISPYYGVSFLEFFLVFFSRLFSGKLFYDHLYIDDIQVIVFFAIAVSCSVVGTFLVLKKMAMYANVVSHTILFGLVCVCLFTHQLIHLSMQALTIAAVSTTLLTGASIHFIRNVFKVAEEASTALVFSLLFSASLLLLVFLTRNAHVGTELVIGNADALAKTDILPIFLVLLINLGISYCFFSSFVCVSFDTIFAFSLGIRIRLVDYLIMLLLSASIVGAFKAVGVLMSLAFLLIPGLIAKLIASSVQEMMVYSMVFGGLAALIAPALSRSILSIYGIGLSTSGLAVGLLLVFYVVMLVFVCSKRAIMLRQKLDK</sequence>
<gene>
    <name type="ordered locus">CT_070</name>
</gene>
<accession>O84073</accession>
<keyword id="KW-0997">Cell inner membrane</keyword>
<keyword id="KW-1003">Cell membrane</keyword>
<keyword id="KW-0472">Membrane</keyword>
<keyword id="KW-1185">Reference proteome</keyword>
<keyword id="KW-0812">Transmembrane</keyword>
<keyword id="KW-1133">Transmembrane helix</keyword>
<keyword id="KW-0813">Transport</keyword>
<evidence type="ECO:0000255" key="1"/>
<evidence type="ECO:0000305" key="2"/>